<gene>
    <name evidence="1" type="primary">nusG</name>
    <name type="ordered locus">BH0118</name>
</gene>
<dbReference type="EMBL" id="BA000004">
    <property type="protein sequence ID" value="BAB03837.1"/>
    <property type="molecule type" value="Genomic_DNA"/>
</dbReference>
<dbReference type="PIR" id="F83664">
    <property type="entry name" value="F83664"/>
</dbReference>
<dbReference type="RefSeq" id="WP_010896301.1">
    <property type="nucleotide sequence ID" value="NC_002570.2"/>
</dbReference>
<dbReference type="SMR" id="Q9KGE7"/>
<dbReference type="STRING" id="272558.gene:10725958"/>
<dbReference type="GeneID" id="87595661"/>
<dbReference type="KEGG" id="bha:BH0118"/>
<dbReference type="eggNOG" id="COG0250">
    <property type="taxonomic scope" value="Bacteria"/>
</dbReference>
<dbReference type="HOGENOM" id="CLU_067287_1_1_9"/>
<dbReference type="OrthoDB" id="9809075at2"/>
<dbReference type="Proteomes" id="UP000001258">
    <property type="component" value="Chromosome"/>
</dbReference>
<dbReference type="GO" id="GO:0005829">
    <property type="term" value="C:cytosol"/>
    <property type="evidence" value="ECO:0007669"/>
    <property type="project" value="TreeGrafter"/>
</dbReference>
<dbReference type="GO" id="GO:0006353">
    <property type="term" value="P:DNA-templated transcription termination"/>
    <property type="evidence" value="ECO:0007669"/>
    <property type="project" value="UniProtKB-UniRule"/>
</dbReference>
<dbReference type="GO" id="GO:0032784">
    <property type="term" value="P:regulation of DNA-templated transcription elongation"/>
    <property type="evidence" value="ECO:0007669"/>
    <property type="project" value="InterPro"/>
</dbReference>
<dbReference type="GO" id="GO:0031564">
    <property type="term" value="P:transcription antitermination"/>
    <property type="evidence" value="ECO:0007669"/>
    <property type="project" value="UniProtKB-UniRule"/>
</dbReference>
<dbReference type="GO" id="GO:0140673">
    <property type="term" value="P:transcription elongation-coupled chromatin remodeling"/>
    <property type="evidence" value="ECO:0007669"/>
    <property type="project" value="InterPro"/>
</dbReference>
<dbReference type="CDD" id="cd06091">
    <property type="entry name" value="KOW_NusG"/>
    <property type="match status" value="1"/>
</dbReference>
<dbReference type="CDD" id="cd09891">
    <property type="entry name" value="NGN_Bact_1"/>
    <property type="match status" value="1"/>
</dbReference>
<dbReference type="FunFam" id="2.30.30.30:FF:000002">
    <property type="entry name" value="Transcription termination/antitermination factor NusG"/>
    <property type="match status" value="1"/>
</dbReference>
<dbReference type="FunFam" id="3.30.70.940:FF:000002">
    <property type="entry name" value="Transcription termination/antitermination protein NusG"/>
    <property type="match status" value="1"/>
</dbReference>
<dbReference type="Gene3D" id="2.30.30.30">
    <property type="match status" value="1"/>
</dbReference>
<dbReference type="Gene3D" id="3.30.70.940">
    <property type="entry name" value="NusG, N-terminal domain"/>
    <property type="match status" value="1"/>
</dbReference>
<dbReference type="HAMAP" id="MF_00948">
    <property type="entry name" value="NusG"/>
    <property type="match status" value="1"/>
</dbReference>
<dbReference type="InterPro" id="IPR005824">
    <property type="entry name" value="KOW"/>
</dbReference>
<dbReference type="InterPro" id="IPR047050">
    <property type="entry name" value="NGN"/>
</dbReference>
<dbReference type="InterPro" id="IPR006645">
    <property type="entry name" value="NGN-like_dom"/>
</dbReference>
<dbReference type="InterPro" id="IPR036735">
    <property type="entry name" value="NGN_dom_sf"/>
</dbReference>
<dbReference type="InterPro" id="IPR043425">
    <property type="entry name" value="NusG-like"/>
</dbReference>
<dbReference type="InterPro" id="IPR014722">
    <property type="entry name" value="Rib_uL2_dom2"/>
</dbReference>
<dbReference type="InterPro" id="IPR001062">
    <property type="entry name" value="Transcrpt_antiterm_NusG"/>
</dbReference>
<dbReference type="InterPro" id="IPR015869">
    <property type="entry name" value="Transcrpt_antiterm_NusG_bac_CS"/>
</dbReference>
<dbReference type="InterPro" id="IPR010216">
    <property type="entry name" value="Transcrpt_antiterm_NusG_myco"/>
</dbReference>
<dbReference type="InterPro" id="IPR008991">
    <property type="entry name" value="Translation_prot_SH3-like_sf"/>
</dbReference>
<dbReference type="NCBIfam" id="TIGR00922">
    <property type="entry name" value="nusG"/>
    <property type="match status" value="1"/>
</dbReference>
<dbReference type="NCBIfam" id="TIGR01956">
    <property type="entry name" value="NusG_myco"/>
    <property type="match status" value="1"/>
</dbReference>
<dbReference type="PANTHER" id="PTHR30265">
    <property type="entry name" value="RHO-INTERACTING TRANSCRIPTION TERMINATION FACTOR NUSG"/>
    <property type="match status" value="1"/>
</dbReference>
<dbReference type="PANTHER" id="PTHR30265:SF2">
    <property type="entry name" value="TRANSCRIPTION TERMINATION_ANTITERMINATION PROTEIN NUSG"/>
    <property type="match status" value="1"/>
</dbReference>
<dbReference type="Pfam" id="PF00467">
    <property type="entry name" value="KOW"/>
    <property type="match status" value="1"/>
</dbReference>
<dbReference type="Pfam" id="PF02357">
    <property type="entry name" value="NusG"/>
    <property type="match status" value="1"/>
</dbReference>
<dbReference type="PRINTS" id="PR00338">
    <property type="entry name" value="NUSGTNSCPFCT"/>
</dbReference>
<dbReference type="SMART" id="SM00739">
    <property type="entry name" value="KOW"/>
    <property type="match status" value="1"/>
</dbReference>
<dbReference type="SMART" id="SM00738">
    <property type="entry name" value="NGN"/>
    <property type="match status" value="1"/>
</dbReference>
<dbReference type="SUPFAM" id="SSF82679">
    <property type="entry name" value="N-utilization substance G protein NusG, N-terminal domain"/>
    <property type="match status" value="1"/>
</dbReference>
<dbReference type="SUPFAM" id="SSF50104">
    <property type="entry name" value="Translation proteins SH3-like domain"/>
    <property type="match status" value="1"/>
</dbReference>
<dbReference type="PROSITE" id="PS01014">
    <property type="entry name" value="NUSG"/>
    <property type="match status" value="1"/>
</dbReference>
<sequence length="178" mass="20467">MEKNWYVVHTYSGYENKVKTNLEKRVESMDMTDKIFRVMVPVEEETEVKNGKSKQVSRKVFPGYVLVEMVMTDDSWYVVRNTPGVTGFVGSAGAGSKPTPLLPEEVDAILRQMGMQEERQVEIDFQLKESVKVKEGPFANFIGTIEEIQLDKRKLKVHVNMFGRETPVELEFTQIEKI</sequence>
<evidence type="ECO:0000255" key="1">
    <source>
        <dbReference type="HAMAP-Rule" id="MF_00948"/>
    </source>
</evidence>
<accession>Q9KGE7</accession>
<proteinExistence type="inferred from homology"/>
<feature type="chain" id="PRO_0000113915" description="Transcription termination/antitermination protein NusG">
    <location>
        <begin position="1"/>
        <end position="178"/>
    </location>
</feature>
<feature type="domain" description="KOW" evidence="1">
    <location>
        <begin position="130"/>
        <end position="159"/>
    </location>
</feature>
<keyword id="KW-1185">Reference proteome</keyword>
<keyword id="KW-0804">Transcription</keyword>
<keyword id="KW-0889">Transcription antitermination</keyword>
<keyword id="KW-0805">Transcription regulation</keyword>
<keyword id="KW-0806">Transcription termination</keyword>
<comment type="function">
    <text evidence="1">Participates in transcription elongation, termination and antitermination.</text>
</comment>
<comment type="similarity">
    <text evidence="1">Belongs to the NusG family.</text>
</comment>
<name>NUSG_HALH5</name>
<organism>
    <name type="scientific">Halalkalibacterium halodurans (strain ATCC BAA-125 / DSM 18197 / FERM 7344 / JCM 9153 / C-125)</name>
    <name type="common">Bacillus halodurans</name>
    <dbReference type="NCBI Taxonomy" id="272558"/>
    <lineage>
        <taxon>Bacteria</taxon>
        <taxon>Bacillati</taxon>
        <taxon>Bacillota</taxon>
        <taxon>Bacilli</taxon>
        <taxon>Bacillales</taxon>
        <taxon>Bacillaceae</taxon>
        <taxon>Halalkalibacterium (ex Joshi et al. 2022)</taxon>
    </lineage>
</organism>
<protein>
    <recommendedName>
        <fullName evidence="1">Transcription termination/antitermination protein NusG</fullName>
    </recommendedName>
</protein>
<reference key="1">
    <citation type="journal article" date="2000" name="Nucleic Acids Res.">
        <title>Complete genome sequence of the alkaliphilic bacterium Bacillus halodurans and genomic sequence comparison with Bacillus subtilis.</title>
        <authorList>
            <person name="Takami H."/>
            <person name="Nakasone K."/>
            <person name="Takaki Y."/>
            <person name="Maeno G."/>
            <person name="Sasaki R."/>
            <person name="Masui N."/>
            <person name="Fuji F."/>
            <person name="Hirama C."/>
            <person name="Nakamura Y."/>
            <person name="Ogasawara N."/>
            <person name="Kuhara S."/>
            <person name="Horikoshi K."/>
        </authorList>
    </citation>
    <scope>NUCLEOTIDE SEQUENCE [LARGE SCALE GENOMIC DNA]</scope>
    <source>
        <strain>ATCC BAA-125 / DSM 18197 / FERM 7344 / JCM 9153 / C-125</strain>
    </source>
</reference>